<feature type="chain" id="PRO_1000076126" description="Glutamyl-tRNA(Gln) amidotransferase subunit A">
    <location>
        <begin position="1"/>
        <end position="483"/>
    </location>
</feature>
<feature type="active site" description="Charge relay system" evidence="1">
    <location>
        <position position="76"/>
    </location>
</feature>
<feature type="active site" description="Charge relay system" evidence="1">
    <location>
        <position position="151"/>
    </location>
</feature>
<feature type="active site" description="Acyl-ester intermediate" evidence="1">
    <location>
        <position position="175"/>
    </location>
</feature>
<gene>
    <name evidence="1" type="primary">gatA</name>
    <name type="ordered locus">CBUD_0518</name>
</gene>
<keyword id="KW-0067">ATP-binding</keyword>
<keyword id="KW-0436">Ligase</keyword>
<keyword id="KW-0547">Nucleotide-binding</keyword>
<keyword id="KW-0648">Protein biosynthesis</keyword>
<dbReference type="EC" id="6.3.5.7" evidence="1"/>
<dbReference type="EMBL" id="CP000733">
    <property type="protein sequence ID" value="ABS77610.1"/>
    <property type="molecule type" value="Genomic_DNA"/>
</dbReference>
<dbReference type="RefSeq" id="WP_005772005.1">
    <property type="nucleotide sequence ID" value="NC_009727.1"/>
</dbReference>
<dbReference type="SMR" id="A9KBI0"/>
<dbReference type="KEGG" id="cbd:CBUD_0518"/>
<dbReference type="HOGENOM" id="CLU_009600_0_3_6"/>
<dbReference type="Proteomes" id="UP000008555">
    <property type="component" value="Chromosome"/>
</dbReference>
<dbReference type="GO" id="GO:0030956">
    <property type="term" value="C:glutamyl-tRNA(Gln) amidotransferase complex"/>
    <property type="evidence" value="ECO:0007669"/>
    <property type="project" value="InterPro"/>
</dbReference>
<dbReference type="GO" id="GO:0005524">
    <property type="term" value="F:ATP binding"/>
    <property type="evidence" value="ECO:0007669"/>
    <property type="project" value="UniProtKB-KW"/>
</dbReference>
<dbReference type="GO" id="GO:0050567">
    <property type="term" value="F:glutaminyl-tRNA synthase (glutamine-hydrolyzing) activity"/>
    <property type="evidence" value="ECO:0007669"/>
    <property type="project" value="UniProtKB-UniRule"/>
</dbReference>
<dbReference type="GO" id="GO:0006412">
    <property type="term" value="P:translation"/>
    <property type="evidence" value="ECO:0007669"/>
    <property type="project" value="UniProtKB-UniRule"/>
</dbReference>
<dbReference type="Gene3D" id="3.90.1300.10">
    <property type="entry name" value="Amidase signature (AS) domain"/>
    <property type="match status" value="1"/>
</dbReference>
<dbReference type="HAMAP" id="MF_00120">
    <property type="entry name" value="GatA"/>
    <property type="match status" value="1"/>
</dbReference>
<dbReference type="InterPro" id="IPR000120">
    <property type="entry name" value="Amidase"/>
</dbReference>
<dbReference type="InterPro" id="IPR020556">
    <property type="entry name" value="Amidase_CS"/>
</dbReference>
<dbReference type="InterPro" id="IPR023631">
    <property type="entry name" value="Amidase_dom"/>
</dbReference>
<dbReference type="InterPro" id="IPR036928">
    <property type="entry name" value="AS_sf"/>
</dbReference>
<dbReference type="InterPro" id="IPR004412">
    <property type="entry name" value="GatA"/>
</dbReference>
<dbReference type="NCBIfam" id="TIGR00132">
    <property type="entry name" value="gatA"/>
    <property type="match status" value="1"/>
</dbReference>
<dbReference type="PANTHER" id="PTHR11895:SF151">
    <property type="entry name" value="GLUTAMYL-TRNA(GLN) AMIDOTRANSFERASE SUBUNIT A"/>
    <property type="match status" value="1"/>
</dbReference>
<dbReference type="PANTHER" id="PTHR11895">
    <property type="entry name" value="TRANSAMIDASE"/>
    <property type="match status" value="1"/>
</dbReference>
<dbReference type="Pfam" id="PF01425">
    <property type="entry name" value="Amidase"/>
    <property type="match status" value="1"/>
</dbReference>
<dbReference type="SUPFAM" id="SSF75304">
    <property type="entry name" value="Amidase signature (AS) enzymes"/>
    <property type="match status" value="1"/>
</dbReference>
<dbReference type="PROSITE" id="PS00571">
    <property type="entry name" value="AMIDASES"/>
    <property type="match status" value="1"/>
</dbReference>
<reference key="1">
    <citation type="journal article" date="2009" name="Infect. Immun.">
        <title>Comparative genomics reveal extensive transposon-mediated genomic plasticity and diversity among potential effector proteins within the genus Coxiella.</title>
        <authorList>
            <person name="Beare P.A."/>
            <person name="Unsworth N."/>
            <person name="Andoh M."/>
            <person name="Voth D.E."/>
            <person name="Omsland A."/>
            <person name="Gilk S.D."/>
            <person name="Williams K.P."/>
            <person name="Sobral B.W."/>
            <person name="Kupko J.J. III"/>
            <person name="Porcella S.F."/>
            <person name="Samuel J.E."/>
            <person name="Heinzen R.A."/>
        </authorList>
    </citation>
    <scope>NUCLEOTIDE SEQUENCE [LARGE SCALE GENOMIC DNA]</scope>
    <source>
        <strain>Dugway 5J108-111</strain>
    </source>
</reference>
<name>GATA_COXBN</name>
<comment type="function">
    <text evidence="1">Allows the formation of correctly charged Gln-tRNA(Gln) through the transamidation of misacylated Glu-tRNA(Gln) in organisms which lack glutaminyl-tRNA synthetase. The reaction takes place in the presence of glutamine and ATP through an activated gamma-phospho-Glu-tRNA(Gln).</text>
</comment>
<comment type="catalytic activity">
    <reaction evidence="1">
        <text>L-glutamyl-tRNA(Gln) + L-glutamine + ATP + H2O = L-glutaminyl-tRNA(Gln) + L-glutamate + ADP + phosphate + H(+)</text>
        <dbReference type="Rhea" id="RHEA:17521"/>
        <dbReference type="Rhea" id="RHEA-COMP:9681"/>
        <dbReference type="Rhea" id="RHEA-COMP:9684"/>
        <dbReference type="ChEBI" id="CHEBI:15377"/>
        <dbReference type="ChEBI" id="CHEBI:15378"/>
        <dbReference type="ChEBI" id="CHEBI:29985"/>
        <dbReference type="ChEBI" id="CHEBI:30616"/>
        <dbReference type="ChEBI" id="CHEBI:43474"/>
        <dbReference type="ChEBI" id="CHEBI:58359"/>
        <dbReference type="ChEBI" id="CHEBI:78520"/>
        <dbReference type="ChEBI" id="CHEBI:78521"/>
        <dbReference type="ChEBI" id="CHEBI:456216"/>
        <dbReference type="EC" id="6.3.5.7"/>
    </reaction>
</comment>
<comment type="subunit">
    <text evidence="1">Heterotrimer of A, B and C subunits.</text>
</comment>
<comment type="similarity">
    <text evidence="1">Belongs to the amidase family. GatA subfamily.</text>
</comment>
<organism>
    <name type="scientific">Coxiella burnetii (strain Dugway 5J108-111)</name>
    <dbReference type="NCBI Taxonomy" id="434922"/>
    <lineage>
        <taxon>Bacteria</taxon>
        <taxon>Pseudomonadati</taxon>
        <taxon>Pseudomonadota</taxon>
        <taxon>Gammaproteobacteria</taxon>
        <taxon>Legionellales</taxon>
        <taxon>Coxiellaceae</taxon>
        <taxon>Coxiella</taxon>
    </lineage>
</organism>
<accession>A9KBI0</accession>
<sequence>MHQKTIAELKQDLRDKTISSVELTQHFLDRIKTINPTLNSFISITEEYALTQAKAADARLAKGEATSLTGIPIAQKDIFCTKDIKTSCGSKMLDNFIAPYDATVVEQLNKAGAILIGKTNMDEFAMGSSNENSYFGAVKNPWDLERVPGGSSGGSAAAVAARLVPGATGTDTGGSIRQPAALCGITGLKPTYGRVSRYGMIAFASSLDQAGPMAQTAEDAALLLNALAGHDAKDSTSINKNVPDYTATLTTSLEGLKVGLPKEYFGEGLNSSIAESIETVKKTLEKMGATFIEIQLPHTDFAAPAYYVLAPAECSSNLARYDGVRYGYRCDKPVDLDDLYKRSRTEGFGSEVKRRIMIGTYVLSAGYYDAYYLKAQKIRRLIRDDFMKAFETVDVILTPATPTPAFKLNEKIADPVAMYLSDVYTIAVNLAGLPAIAFPAGFMDQLPIGAQLIGNYFEEARLLNITHRYQQETDWHKQSPKLR</sequence>
<protein>
    <recommendedName>
        <fullName evidence="1">Glutamyl-tRNA(Gln) amidotransferase subunit A</fullName>
        <shortName evidence="1">Glu-ADT subunit A</shortName>
        <ecNumber evidence="1">6.3.5.7</ecNumber>
    </recommendedName>
</protein>
<evidence type="ECO:0000255" key="1">
    <source>
        <dbReference type="HAMAP-Rule" id="MF_00120"/>
    </source>
</evidence>
<proteinExistence type="inferred from homology"/>